<reference key="1">
    <citation type="journal article" date="2009" name="BMC Genomics">
        <title>Genome evolution driven by host adaptations results in a more virulent and antimicrobial-resistant Streptococcus pneumoniae serotype 14.</title>
        <authorList>
            <person name="Ding F."/>
            <person name="Tang P."/>
            <person name="Hsu M.-H."/>
            <person name="Cui P."/>
            <person name="Hu S."/>
            <person name="Yu J."/>
            <person name="Chiu C.-H."/>
        </authorList>
    </citation>
    <scope>NUCLEOTIDE SEQUENCE [LARGE SCALE GENOMIC DNA]</scope>
    <source>
        <strain>CGSP14</strain>
    </source>
</reference>
<name>THIM1_STRPS</name>
<gene>
    <name evidence="1" type="primary">thiM1</name>
    <name type="ordered locus">SPCG_0666</name>
</gene>
<proteinExistence type="inferred from homology"/>
<evidence type="ECO:0000255" key="1">
    <source>
        <dbReference type="HAMAP-Rule" id="MF_00228"/>
    </source>
</evidence>
<evidence type="ECO:0000305" key="2"/>
<protein>
    <recommendedName>
        <fullName evidence="1">Hydroxyethylthiazole kinase 1</fullName>
        <ecNumber evidence="1">2.7.1.50</ecNumber>
    </recommendedName>
    <alternativeName>
        <fullName evidence="1">4-methyl-5-beta-hydroxyethylthiazole kinase 1</fullName>
        <shortName evidence="1">TH kinase 1</shortName>
        <shortName evidence="1">Thz kinase 1</shortName>
    </alternativeName>
</protein>
<keyword id="KW-0067">ATP-binding</keyword>
<keyword id="KW-0418">Kinase</keyword>
<keyword id="KW-0460">Magnesium</keyword>
<keyword id="KW-0479">Metal-binding</keyword>
<keyword id="KW-0547">Nucleotide-binding</keyword>
<keyword id="KW-0784">Thiamine biosynthesis</keyword>
<keyword id="KW-0808">Transferase</keyword>
<accession>B2IN99</accession>
<organism>
    <name type="scientific">Streptococcus pneumoniae (strain CGSP14)</name>
    <dbReference type="NCBI Taxonomy" id="516950"/>
    <lineage>
        <taxon>Bacteria</taxon>
        <taxon>Bacillati</taxon>
        <taxon>Bacillota</taxon>
        <taxon>Bacilli</taxon>
        <taxon>Lactobacillales</taxon>
        <taxon>Streptococcaceae</taxon>
        <taxon>Streptococcus</taxon>
    </lineage>
</organism>
<sequence>MTSLKLLKEKAPLVICITNDVVKNFTANGLVALGASPAMSEFPADLEDLLKYAGGLLINIGTLTDENWKLYQAALKIAEKYNVPVVLDPVACGAGEYRKKVADDLINNYKLAAIRGNAGEIASLVGIDVASKGVDSAGVDNIDEIALAANEKFNIPIVVTGEVDAIAVNGEVVTIHNGSAMMPKVIGTGCLLGAVVASFIGLEKGQELKSLETAMLVYNIAGEMAEKRPNGHLPGTFKVEFINALYEITDEDVKEFKRVK</sequence>
<comment type="function">
    <text evidence="1">Catalyzes the phosphorylation of the hydroxyl group of 4-methyl-5-beta-hydroxyethylthiazole (THZ).</text>
</comment>
<comment type="catalytic activity">
    <reaction evidence="1">
        <text>5-(2-hydroxyethyl)-4-methylthiazole + ATP = 4-methyl-5-(2-phosphooxyethyl)-thiazole + ADP + H(+)</text>
        <dbReference type="Rhea" id="RHEA:24212"/>
        <dbReference type="ChEBI" id="CHEBI:15378"/>
        <dbReference type="ChEBI" id="CHEBI:17957"/>
        <dbReference type="ChEBI" id="CHEBI:30616"/>
        <dbReference type="ChEBI" id="CHEBI:58296"/>
        <dbReference type="ChEBI" id="CHEBI:456216"/>
        <dbReference type="EC" id="2.7.1.50"/>
    </reaction>
</comment>
<comment type="cofactor">
    <cofactor evidence="1">
        <name>Mg(2+)</name>
        <dbReference type="ChEBI" id="CHEBI:18420"/>
    </cofactor>
</comment>
<comment type="pathway">
    <text evidence="1">Cofactor biosynthesis; thiamine diphosphate biosynthesis; 4-methyl-5-(2-phosphoethyl)-thiazole from 5-(2-hydroxyethyl)-4-methylthiazole: step 1/1.</text>
</comment>
<comment type="similarity">
    <text evidence="1">Belongs to the Thz kinase family.</text>
</comment>
<comment type="sequence caution" evidence="2">
    <conflict type="erroneous initiation">
        <sequence resource="EMBL-CDS" id="ACB89918"/>
    </conflict>
</comment>
<feature type="chain" id="PRO_0000383900" description="Hydroxyethylthiazole kinase 1">
    <location>
        <begin position="1"/>
        <end position="260"/>
    </location>
</feature>
<feature type="binding site" evidence="1">
    <location>
        <position position="39"/>
    </location>
    <ligand>
        <name>substrate</name>
    </ligand>
</feature>
<feature type="binding site" evidence="1">
    <location>
        <position position="115"/>
    </location>
    <ligand>
        <name>ATP</name>
        <dbReference type="ChEBI" id="CHEBI:30616"/>
    </ligand>
</feature>
<feature type="binding site" evidence="1">
    <location>
        <position position="160"/>
    </location>
    <ligand>
        <name>ATP</name>
        <dbReference type="ChEBI" id="CHEBI:30616"/>
    </ligand>
</feature>
<feature type="binding site" evidence="1">
    <location>
        <position position="187"/>
    </location>
    <ligand>
        <name>substrate</name>
    </ligand>
</feature>
<dbReference type="EC" id="2.7.1.50" evidence="1"/>
<dbReference type="EMBL" id="CP001033">
    <property type="protein sequence ID" value="ACB89918.1"/>
    <property type="status" value="ALT_INIT"/>
    <property type="molecule type" value="Genomic_DNA"/>
</dbReference>
<dbReference type="SMR" id="B2IN99"/>
<dbReference type="KEGG" id="spw:SPCG_0666"/>
<dbReference type="HOGENOM" id="CLU_019943_0_2_9"/>
<dbReference type="UniPathway" id="UPA00060">
    <property type="reaction ID" value="UER00139"/>
</dbReference>
<dbReference type="GO" id="GO:0005524">
    <property type="term" value="F:ATP binding"/>
    <property type="evidence" value="ECO:0007669"/>
    <property type="project" value="UniProtKB-UniRule"/>
</dbReference>
<dbReference type="GO" id="GO:0004417">
    <property type="term" value="F:hydroxyethylthiazole kinase activity"/>
    <property type="evidence" value="ECO:0007669"/>
    <property type="project" value="UniProtKB-UniRule"/>
</dbReference>
<dbReference type="GO" id="GO:0000287">
    <property type="term" value="F:magnesium ion binding"/>
    <property type="evidence" value="ECO:0007669"/>
    <property type="project" value="UniProtKB-UniRule"/>
</dbReference>
<dbReference type="GO" id="GO:0009228">
    <property type="term" value="P:thiamine biosynthetic process"/>
    <property type="evidence" value="ECO:0007669"/>
    <property type="project" value="UniProtKB-KW"/>
</dbReference>
<dbReference type="GO" id="GO:0009229">
    <property type="term" value="P:thiamine diphosphate biosynthetic process"/>
    <property type="evidence" value="ECO:0007669"/>
    <property type="project" value="UniProtKB-UniRule"/>
</dbReference>
<dbReference type="CDD" id="cd01170">
    <property type="entry name" value="THZ_kinase"/>
    <property type="match status" value="1"/>
</dbReference>
<dbReference type="Gene3D" id="3.40.1190.20">
    <property type="match status" value="1"/>
</dbReference>
<dbReference type="HAMAP" id="MF_00228">
    <property type="entry name" value="Thz_kinase"/>
    <property type="match status" value="1"/>
</dbReference>
<dbReference type="InterPro" id="IPR000417">
    <property type="entry name" value="Hyethyz_kinase"/>
</dbReference>
<dbReference type="InterPro" id="IPR029056">
    <property type="entry name" value="Ribokinase-like"/>
</dbReference>
<dbReference type="NCBIfam" id="NF006830">
    <property type="entry name" value="PRK09355.1"/>
    <property type="match status" value="1"/>
</dbReference>
<dbReference type="NCBIfam" id="TIGR00694">
    <property type="entry name" value="thiM"/>
    <property type="match status" value="1"/>
</dbReference>
<dbReference type="Pfam" id="PF02110">
    <property type="entry name" value="HK"/>
    <property type="match status" value="1"/>
</dbReference>
<dbReference type="PIRSF" id="PIRSF000513">
    <property type="entry name" value="Thz_kinase"/>
    <property type="match status" value="1"/>
</dbReference>
<dbReference type="PRINTS" id="PR01099">
    <property type="entry name" value="HYETHTZKNASE"/>
</dbReference>
<dbReference type="SUPFAM" id="SSF53613">
    <property type="entry name" value="Ribokinase-like"/>
    <property type="match status" value="1"/>
</dbReference>